<feature type="chain" id="PRO_0000452779" description="Small polypeptide DEVIL 11">
    <location>
        <begin position="1"/>
        <end position="87"/>
    </location>
</feature>
<feature type="transmembrane region" description="Helical" evidence="3">
    <location>
        <begin position="64"/>
        <end position="80"/>
    </location>
</feature>
<feature type="region of interest" description="Disordered" evidence="5">
    <location>
        <begin position="1"/>
        <end position="47"/>
    </location>
</feature>
<feature type="region of interest" description="Required for DVL/RTFL small polypeptide activity" evidence="2">
    <location>
        <begin position="51"/>
        <end position="82"/>
    </location>
</feature>
<feature type="compositionally biased region" description="Polar residues" evidence="5">
    <location>
        <begin position="1"/>
        <end position="11"/>
    </location>
</feature>
<feature type="compositionally biased region" description="Basic and acidic residues" evidence="5">
    <location>
        <begin position="14"/>
        <end position="27"/>
    </location>
</feature>
<feature type="compositionally biased region" description="Low complexity" evidence="5">
    <location>
        <begin position="29"/>
        <end position="41"/>
    </location>
</feature>
<feature type="glycosylation site" description="N-linked (GlcNAc...) asparagine" evidence="4">
    <location>
        <position position="83"/>
    </location>
</feature>
<reference key="1">
    <citation type="journal article" date="2004" name="Plant J.">
        <title>DVL, a novel class of small polypeptides: overexpression alters Arabidopsis development.</title>
        <authorList>
            <person name="Wen J."/>
            <person name="Lease K.A."/>
            <person name="Walker J.C."/>
        </authorList>
    </citation>
    <scope>NUCLEOTIDE SEQUENCE [MRNA]</scope>
    <scope>GENE FAMILY</scope>
    <scope>NOMENCLATURE</scope>
    <source>
        <strain>cv. Columbia</strain>
    </source>
</reference>
<reference key="2">
    <citation type="journal article" date="1999" name="Nature">
        <title>Sequence and analysis of chromosome 2 of the plant Arabidopsis thaliana.</title>
        <authorList>
            <person name="Lin X."/>
            <person name="Kaul S."/>
            <person name="Rounsley S.D."/>
            <person name="Shea T.P."/>
            <person name="Benito M.-I."/>
            <person name="Town C.D."/>
            <person name="Fujii C.Y."/>
            <person name="Mason T.M."/>
            <person name="Bowman C.L."/>
            <person name="Barnstead M.E."/>
            <person name="Feldblyum T.V."/>
            <person name="Buell C.R."/>
            <person name="Ketchum K.A."/>
            <person name="Lee J.J."/>
            <person name="Ronning C.M."/>
            <person name="Koo H.L."/>
            <person name="Moffat K.S."/>
            <person name="Cronin L.A."/>
            <person name="Shen M."/>
            <person name="Pai G."/>
            <person name="Van Aken S."/>
            <person name="Umayam L."/>
            <person name="Tallon L.J."/>
            <person name="Gill J.E."/>
            <person name="Adams M.D."/>
            <person name="Carrera A.J."/>
            <person name="Creasy T.H."/>
            <person name="Goodman H.M."/>
            <person name="Somerville C.R."/>
            <person name="Copenhaver G.P."/>
            <person name="Preuss D."/>
            <person name="Nierman W.C."/>
            <person name="White O."/>
            <person name="Eisen J.A."/>
            <person name="Salzberg S.L."/>
            <person name="Fraser C.M."/>
            <person name="Venter J.C."/>
        </authorList>
    </citation>
    <scope>NUCLEOTIDE SEQUENCE [LARGE SCALE GENOMIC DNA]</scope>
    <source>
        <strain>cv. Columbia</strain>
    </source>
</reference>
<reference key="3">
    <citation type="journal article" date="2017" name="Plant J.">
        <title>Araport11: a complete reannotation of the Arabidopsis thaliana reference genome.</title>
        <authorList>
            <person name="Cheng C.Y."/>
            <person name="Krishnakumar V."/>
            <person name="Chan A.P."/>
            <person name="Thibaud-Nissen F."/>
            <person name="Schobel S."/>
            <person name="Town C.D."/>
        </authorList>
    </citation>
    <scope>GENOME REANNOTATION</scope>
    <source>
        <strain>cv. Columbia</strain>
    </source>
</reference>
<reference key="4">
    <citation type="journal article" date="2002" name="Science">
        <title>Functional annotation of a full-length Arabidopsis cDNA collection.</title>
        <authorList>
            <person name="Seki M."/>
            <person name="Narusaka M."/>
            <person name="Kamiya A."/>
            <person name="Ishida J."/>
            <person name="Satou M."/>
            <person name="Sakurai T."/>
            <person name="Nakajima M."/>
            <person name="Enju A."/>
            <person name="Akiyama K."/>
            <person name="Oono Y."/>
            <person name="Muramatsu M."/>
            <person name="Hayashizaki Y."/>
            <person name="Kawai J."/>
            <person name="Carninci P."/>
            <person name="Itoh M."/>
            <person name="Ishii Y."/>
            <person name="Arakawa T."/>
            <person name="Shibata K."/>
            <person name="Shinagawa A."/>
            <person name="Shinozaki K."/>
        </authorList>
    </citation>
    <scope>NUCLEOTIDE SEQUENCE [LARGE SCALE MRNA]</scope>
    <source>
        <strain>cv. Columbia</strain>
    </source>
</reference>
<reference key="5">
    <citation type="journal article" date="2003" name="Science">
        <title>Empirical analysis of transcriptional activity in the Arabidopsis genome.</title>
        <authorList>
            <person name="Yamada K."/>
            <person name="Lim J."/>
            <person name="Dale J.M."/>
            <person name="Chen H."/>
            <person name="Shinn P."/>
            <person name="Palm C.J."/>
            <person name="Southwick A.M."/>
            <person name="Wu H.C."/>
            <person name="Kim C.J."/>
            <person name="Nguyen M."/>
            <person name="Pham P.K."/>
            <person name="Cheuk R.F."/>
            <person name="Karlin-Newmann G."/>
            <person name="Liu S.X."/>
            <person name="Lam B."/>
            <person name="Sakano H."/>
            <person name="Wu T."/>
            <person name="Yu G."/>
            <person name="Miranda M."/>
            <person name="Quach H.L."/>
            <person name="Tripp M."/>
            <person name="Chang C.H."/>
            <person name="Lee J.M."/>
            <person name="Toriumi M.J."/>
            <person name="Chan M.M."/>
            <person name="Tang C.C."/>
            <person name="Onodera C.S."/>
            <person name="Deng J.M."/>
            <person name="Akiyama K."/>
            <person name="Ansari Y."/>
            <person name="Arakawa T."/>
            <person name="Banh J."/>
            <person name="Banno F."/>
            <person name="Bowser L."/>
            <person name="Brooks S.Y."/>
            <person name="Carninci P."/>
            <person name="Chao Q."/>
            <person name="Choy N."/>
            <person name="Enju A."/>
            <person name="Goldsmith A.D."/>
            <person name="Gurjal M."/>
            <person name="Hansen N.F."/>
            <person name="Hayashizaki Y."/>
            <person name="Johnson-Hopson C."/>
            <person name="Hsuan V.W."/>
            <person name="Iida K."/>
            <person name="Karnes M."/>
            <person name="Khan S."/>
            <person name="Koesema E."/>
            <person name="Ishida J."/>
            <person name="Jiang P.X."/>
            <person name="Jones T."/>
            <person name="Kawai J."/>
            <person name="Kamiya A."/>
            <person name="Meyers C."/>
            <person name="Nakajima M."/>
            <person name="Narusaka M."/>
            <person name="Seki M."/>
            <person name="Sakurai T."/>
            <person name="Satou M."/>
            <person name="Tamse R."/>
            <person name="Vaysberg M."/>
            <person name="Wallender E.K."/>
            <person name="Wong C."/>
            <person name="Yamamura Y."/>
            <person name="Yuan S."/>
            <person name="Shinozaki K."/>
            <person name="Davis R.W."/>
            <person name="Theologis A."/>
            <person name="Ecker J.R."/>
        </authorList>
    </citation>
    <scope>NUCLEOTIDE SEQUENCE [LARGE SCALE MRNA]</scope>
    <source>
        <strain>cv. Columbia</strain>
    </source>
</reference>
<reference key="6">
    <citation type="submission" date="2002-03" db="EMBL/GenBank/DDBJ databases">
        <title>Full-length cDNA from Arabidopsis thaliana.</title>
        <authorList>
            <person name="Brover V.V."/>
            <person name="Troukhan M.E."/>
            <person name="Alexandrov N.A."/>
            <person name="Lu Y.-P."/>
            <person name="Flavell R.B."/>
            <person name="Feldmann K.A."/>
        </authorList>
    </citation>
    <scope>NUCLEOTIDE SEQUENCE [LARGE SCALE MRNA]</scope>
</reference>
<reference key="7">
    <citation type="journal article" date="2004" name="Plant J.">
        <title>Overexpression of a novel small peptide ROTUNDIFOLIA4 decreases cell proliferation and alters leaf shape in Arabidopsis thaliana.</title>
        <authorList>
            <person name="Narita N.N."/>
            <person name="Moore S."/>
            <person name="Horiguchi G."/>
            <person name="Kubo M."/>
            <person name="Demura T."/>
            <person name="Fukuda H."/>
            <person name="Goodrich J."/>
            <person name="Tsukaya H."/>
        </authorList>
    </citation>
    <scope>GENE FAMILY</scope>
    <source>
        <strain>cv. Columbia</strain>
        <strain>cv. Landsberg erecta</strain>
    </source>
</reference>
<reference key="8">
    <citation type="journal article" date="2015" name="J. Plant Res.">
        <title>Comparative analysis of the RTFL peptide family on the control of plant organogenesis.</title>
        <authorList>
            <person name="Guo P."/>
            <person name="Yoshimura A."/>
            <person name="Ishikawa N."/>
            <person name="Yamaguchi T."/>
            <person name="Guo Y."/>
            <person name="Tsukaya H."/>
        </authorList>
    </citation>
    <scope>REVIEW</scope>
    <scope>GENE FAMILY</scope>
    <scope>NOMENCLATURE</scope>
    <source>
        <strain>cv. Columbia</strain>
    </source>
</reference>
<sequence>MASSSSLTRSGSVHLDEKWKLSKKDGGASRITRSSSTSSSSFNGKKQGRCAFTRKCARLVKEQRARFYIMRRCVIMLICWRDNYSDS</sequence>
<name>DVL11_ARATH</name>
<comment type="function">
    <text evidence="1">Small polypeptide acting as a regulatory molecule which coordinates cellular responses required for differentiation, growth and development, probably by restricting polar cell proliferation in lateral organs and coordinating socket cell recruitment and differentiation at trichome sites.</text>
</comment>
<comment type="subcellular location">
    <subcellularLocation>
        <location evidence="2">Cell membrane</location>
        <topology evidence="3">Single-pass membrane protein</topology>
    </subcellularLocation>
</comment>
<comment type="similarity">
    <text evidence="8">Belongs to the DVL/RTFL small polypeptides family.</text>
</comment>
<proteinExistence type="inferred from homology"/>
<evidence type="ECO:0000250" key="1">
    <source>
        <dbReference type="UniProtKB" id="Q6X5V0"/>
    </source>
</evidence>
<evidence type="ECO:0000250" key="2">
    <source>
        <dbReference type="UniProtKB" id="Q7XXN8"/>
    </source>
</evidence>
<evidence type="ECO:0000255" key="3"/>
<evidence type="ECO:0000255" key="4">
    <source>
        <dbReference type="PROSITE-ProRule" id="PRU00498"/>
    </source>
</evidence>
<evidence type="ECO:0000256" key="5">
    <source>
        <dbReference type="SAM" id="MobiDB-lite"/>
    </source>
</evidence>
<evidence type="ECO:0000303" key="6">
    <source>
    </source>
</evidence>
<evidence type="ECO:0000303" key="7">
    <source>
    </source>
</evidence>
<evidence type="ECO:0000305" key="8"/>
<evidence type="ECO:0000312" key="9">
    <source>
        <dbReference type="Araport" id="AT2G39705"/>
    </source>
</evidence>
<evidence type="ECO:0000312" key="10">
    <source>
        <dbReference type="EMBL" id="AAM14893.1"/>
    </source>
</evidence>
<gene>
    <name evidence="6" type="primary">DVL11</name>
    <name evidence="7" type="synonym">RTFL8</name>
    <name evidence="9" type="ordered locus">At2g39705</name>
    <name evidence="10" type="ORF">F17A14.8</name>
</gene>
<accession>Q8S8S3</accession>
<keyword id="KW-1003">Cell membrane</keyword>
<keyword id="KW-0217">Developmental protein</keyword>
<keyword id="KW-0325">Glycoprotein</keyword>
<keyword id="KW-0472">Membrane</keyword>
<keyword id="KW-1185">Reference proteome</keyword>
<keyword id="KW-0812">Transmembrane</keyword>
<keyword id="KW-1133">Transmembrane helix</keyword>
<dbReference type="EMBL" id="BK001754">
    <property type="protein sequence ID" value="DAA02282.1"/>
    <property type="molecule type" value="mRNA"/>
</dbReference>
<dbReference type="EMBL" id="AC003674">
    <property type="protein sequence ID" value="AAM14893.1"/>
    <property type="molecule type" value="Genomic_DNA"/>
</dbReference>
<dbReference type="EMBL" id="CP002685">
    <property type="protein sequence ID" value="AEC09709.1"/>
    <property type="molecule type" value="Genomic_DNA"/>
</dbReference>
<dbReference type="EMBL" id="AK117621">
    <property type="protein sequence ID" value="BAC42277.1"/>
    <property type="molecule type" value="mRNA"/>
</dbReference>
<dbReference type="EMBL" id="BT005173">
    <property type="protein sequence ID" value="AAO50706.1"/>
    <property type="molecule type" value="mRNA"/>
</dbReference>
<dbReference type="EMBL" id="AY086777">
    <property type="protein sequence ID" value="AAM63828.1"/>
    <property type="molecule type" value="mRNA"/>
</dbReference>
<dbReference type="RefSeq" id="NP_565910.1">
    <property type="nucleotide sequence ID" value="NM_129527.3"/>
</dbReference>
<dbReference type="FunCoup" id="Q8S8S3">
    <property type="interactions" value="190"/>
</dbReference>
<dbReference type="IntAct" id="Q8S8S3">
    <property type="interactions" value="1"/>
</dbReference>
<dbReference type="STRING" id="3702.Q8S8S3"/>
<dbReference type="GlyCosmos" id="Q8S8S3">
    <property type="glycosylation" value="1 site, No reported glycans"/>
</dbReference>
<dbReference type="GlyGen" id="Q8S8S3">
    <property type="glycosylation" value="1 site"/>
</dbReference>
<dbReference type="PaxDb" id="3702-AT2G39705.1"/>
<dbReference type="EnsemblPlants" id="AT2G39705.1">
    <property type="protein sequence ID" value="AT2G39705.1"/>
    <property type="gene ID" value="AT2G39705"/>
</dbReference>
<dbReference type="GeneID" id="818554"/>
<dbReference type="Gramene" id="AT2G39705.1">
    <property type="protein sequence ID" value="AT2G39705.1"/>
    <property type="gene ID" value="AT2G39705"/>
</dbReference>
<dbReference type="KEGG" id="ath:AT2G39705"/>
<dbReference type="Araport" id="AT2G39705"/>
<dbReference type="TAIR" id="AT2G39705">
    <property type="gene designation" value="RTFL8"/>
</dbReference>
<dbReference type="eggNOG" id="ENOG502S3XH">
    <property type="taxonomic scope" value="Eukaryota"/>
</dbReference>
<dbReference type="HOGENOM" id="CLU_150897_1_0_1"/>
<dbReference type="InParanoid" id="Q8S8S3"/>
<dbReference type="OMA" id="SERYWST"/>
<dbReference type="OrthoDB" id="1886376at2759"/>
<dbReference type="PhylomeDB" id="Q8S8S3"/>
<dbReference type="PRO" id="PR:Q8S8S3"/>
<dbReference type="Proteomes" id="UP000006548">
    <property type="component" value="Chromosome 2"/>
</dbReference>
<dbReference type="ExpressionAtlas" id="Q8S8S3">
    <property type="expression patterns" value="baseline and differential"/>
</dbReference>
<dbReference type="GO" id="GO:0005886">
    <property type="term" value="C:plasma membrane"/>
    <property type="evidence" value="ECO:0000250"/>
    <property type="project" value="UniProtKB"/>
</dbReference>
<dbReference type="GO" id="GO:0008285">
    <property type="term" value="P:negative regulation of cell population proliferation"/>
    <property type="evidence" value="ECO:0000250"/>
    <property type="project" value="UniProtKB"/>
</dbReference>
<dbReference type="GO" id="GO:0048367">
    <property type="term" value="P:shoot system development"/>
    <property type="evidence" value="ECO:0000250"/>
    <property type="project" value="TAIR"/>
</dbReference>
<dbReference type="InterPro" id="IPR012552">
    <property type="entry name" value="DVL"/>
</dbReference>
<dbReference type="InterPro" id="IPR051525">
    <property type="entry name" value="DVL_RTFL_regulatory"/>
</dbReference>
<dbReference type="PANTHER" id="PTHR33102">
    <property type="entry name" value="DVL19-RELATED-RELATED"/>
    <property type="match status" value="1"/>
</dbReference>
<dbReference type="Pfam" id="PF08137">
    <property type="entry name" value="DVL"/>
    <property type="match status" value="1"/>
</dbReference>
<organism>
    <name type="scientific">Arabidopsis thaliana</name>
    <name type="common">Mouse-ear cress</name>
    <dbReference type="NCBI Taxonomy" id="3702"/>
    <lineage>
        <taxon>Eukaryota</taxon>
        <taxon>Viridiplantae</taxon>
        <taxon>Streptophyta</taxon>
        <taxon>Embryophyta</taxon>
        <taxon>Tracheophyta</taxon>
        <taxon>Spermatophyta</taxon>
        <taxon>Magnoliopsida</taxon>
        <taxon>eudicotyledons</taxon>
        <taxon>Gunneridae</taxon>
        <taxon>Pentapetalae</taxon>
        <taxon>rosids</taxon>
        <taxon>malvids</taxon>
        <taxon>Brassicales</taxon>
        <taxon>Brassicaceae</taxon>
        <taxon>Camelineae</taxon>
        <taxon>Arabidopsis</taxon>
    </lineage>
</organism>
<protein>
    <recommendedName>
        <fullName evidence="6">Small polypeptide DEVIL 11</fullName>
    </recommendedName>
    <alternativeName>
        <fullName evidence="7">Small polypeptide ROTUNDIFOLIA LIKE 8</fullName>
        <shortName evidence="7">Small polypeptide ROT-FOUR-LIKE 8</shortName>
    </alternativeName>
</protein>